<organism>
    <name type="scientific">Davidiella tassiana</name>
    <name type="common">Mycosphaerella tassiana</name>
    <name type="synonym">Cladosporium herbarum</name>
    <dbReference type="NCBI Taxonomy" id="29918"/>
    <lineage>
        <taxon>Eukaryota</taxon>
        <taxon>Fungi</taxon>
        <taxon>Dikarya</taxon>
        <taxon>Ascomycota</taxon>
        <taxon>Pezizomycotina</taxon>
        <taxon>Dothideomycetes</taxon>
        <taxon>Dothideomycetidae</taxon>
        <taxon>Cladosporiales</taxon>
        <taxon>Cladosporiaceae</taxon>
        <taxon>Cladosporium</taxon>
    </lineage>
</organism>
<dbReference type="EC" id="4.2.1.11"/>
<dbReference type="EMBL" id="X78226">
    <property type="protein sequence ID" value="CAA55070.1"/>
    <property type="molecule type" value="mRNA"/>
</dbReference>
<dbReference type="EMBL" id="U82438">
    <property type="protein sequence ID" value="AAR00929.2"/>
    <property type="molecule type" value="Genomic_DNA"/>
</dbReference>
<dbReference type="PIR" id="S43113">
    <property type="entry name" value="S43113"/>
</dbReference>
<dbReference type="SMR" id="P42040"/>
<dbReference type="Allergome" id="221">
    <property type="allergen name" value="Cla h 6"/>
</dbReference>
<dbReference type="Allergome" id="3205">
    <property type="allergen name" value="Cla h 6.0101"/>
</dbReference>
<dbReference type="UniPathway" id="UPA00109">
    <property type="reaction ID" value="UER00187"/>
</dbReference>
<dbReference type="GO" id="GO:0000015">
    <property type="term" value="C:phosphopyruvate hydratase complex"/>
    <property type="evidence" value="ECO:0007669"/>
    <property type="project" value="InterPro"/>
</dbReference>
<dbReference type="GO" id="GO:0000287">
    <property type="term" value="F:magnesium ion binding"/>
    <property type="evidence" value="ECO:0007669"/>
    <property type="project" value="InterPro"/>
</dbReference>
<dbReference type="GO" id="GO:0004634">
    <property type="term" value="F:phosphopyruvate hydratase activity"/>
    <property type="evidence" value="ECO:0007669"/>
    <property type="project" value="UniProtKB-EC"/>
</dbReference>
<dbReference type="GO" id="GO:0006096">
    <property type="term" value="P:glycolytic process"/>
    <property type="evidence" value="ECO:0007669"/>
    <property type="project" value="UniProtKB-UniPathway"/>
</dbReference>
<dbReference type="CDD" id="cd03313">
    <property type="entry name" value="enolase"/>
    <property type="match status" value="1"/>
</dbReference>
<dbReference type="FunFam" id="3.30.390.10:FF:000001">
    <property type="entry name" value="Enolase"/>
    <property type="match status" value="1"/>
</dbReference>
<dbReference type="FunFam" id="3.20.20.120:FF:000002">
    <property type="entry name" value="Enolase 1"/>
    <property type="match status" value="1"/>
</dbReference>
<dbReference type="Gene3D" id="3.20.20.120">
    <property type="entry name" value="Enolase-like C-terminal domain"/>
    <property type="match status" value="1"/>
</dbReference>
<dbReference type="Gene3D" id="3.30.390.10">
    <property type="entry name" value="Enolase-like, N-terminal domain"/>
    <property type="match status" value="1"/>
</dbReference>
<dbReference type="HAMAP" id="MF_00318">
    <property type="entry name" value="Enolase"/>
    <property type="match status" value="1"/>
</dbReference>
<dbReference type="InterPro" id="IPR000941">
    <property type="entry name" value="Enolase"/>
</dbReference>
<dbReference type="InterPro" id="IPR036849">
    <property type="entry name" value="Enolase-like_C_sf"/>
</dbReference>
<dbReference type="InterPro" id="IPR029017">
    <property type="entry name" value="Enolase-like_N"/>
</dbReference>
<dbReference type="InterPro" id="IPR020810">
    <property type="entry name" value="Enolase_C"/>
</dbReference>
<dbReference type="InterPro" id="IPR020809">
    <property type="entry name" value="Enolase_CS"/>
</dbReference>
<dbReference type="InterPro" id="IPR020811">
    <property type="entry name" value="Enolase_N"/>
</dbReference>
<dbReference type="NCBIfam" id="TIGR01060">
    <property type="entry name" value="eno"/>
    <property type="match status" value="1"/>
</dbReference>
<dbReference type="PANTHER" id="PTHR11902">
    <property type="entry name" value="ENOLASE"/>
    <property type="match status" value="1"/>
</dbReference>
<dbReference type="PANTHER" id="PTHR11902:SF1">
    <property type="entry name" value="ENOLASE"/>
    <property type="match status" value="1"/>
</dbReference>
<dbReference type="Pfam" id="PF00113">
    <property type="entry name" value="Enolase_C"/>
    <property type="match status" value="1"/>
</dbReference>
<dbReference type="Pfam" id="PF03952">
    <property type="entry name" value="Enolase_N"/>
    <property type="match status" value="1"/>
</dbReference>
<dbReference type="PIRSF" id="PIRSF001400">
    <property type="entry name" value="Enolase"/>
    <property type="match status" value="1"/>
</dbReference>
<dbReference type="PRINTS" id="PR00148">
    <property type="entry name" value="ENOLASE"/>
</dbReference>
<dbReference type="SFLD" id="SFLDS00001">
    <property type="entry name" value="Enolase"/>
    <property type="match status" value="1"/>
</dbReference>
<dbReference type="SFLD" id="SFLDF00002">
    <property type="entry name" value="enolase"/>
    <property type="match status" value="1"/>
</dbReference>
<dbReference type="SMART" id="SM01192">
    <property type="entry name" value="Enolase_C"/>
    <property type="match status" value="1"/>
</dbReference>
<dbReference type="SMART" id="SM01193">
    <property type="entry name" value="Enolase_N"/>
    <property type="match status" value="1"/>
</dbReference>
<dbReference type="SUPFAM" id="SSF51604">
    <property type="entry name" value="Enolase C-terminal domain-like"/>
    <property type="match status" value="1"/>
</dbReference>
<dbReference type="SUPFAM" id="SSF54826">
    <property type="entry name" value="Enolase N-terminal domain-like"/>
    <property type="match status" value="1"/>
</dbReference>
<dbReference type="PROSITE" id="PS00164">
    <property type="entry name" value="ENOLASE"/>
    <property type="match status" value="1"/>
</dbReference>
<protein>
    <recommendedName>
        <fullName>Enolase</fullName>
        <ecNumber>4.2.1.11</ecNumber>
    </recommendedName>
    <alternativeName>
        <fullName>2-phospho-D-glycerate hydro-lyase</fullName>
    </alternativeName>
    <alternativeName>
        <fullName>2-phosphoglycerate dehydratase</fullName>
    </alternativeName>
    <alternativeName>
        <fullName>Allergen Cla h VI</fullName>
    </alternativeName>
    <allergenName>Cla h 6</allergenName>
</protein>
<sequence length="440" mass="47519">MPISKIHSRYVYDSRGNPTVEVDIVTETGLHRAIVPSGASTGSHEACELRDGDKSKWAGKGVTKAVANVNEIIAPALIKENLDVKDQAAVDAFLNKLDGTTNKTKIGANAILGVSMAVAKAAAAEKRVPLYAHISDLSGTKKPFVLPVPFMNVVNGGSHAGGRLAFQEFMIVPSGAPSFTEAMRQGAEVYQKLKSLTKKRYGQSAGNVGDEGGVAPDIQTAEEALDLITDAIEEAGYTGQIKIAMDVASSEFYKADEKKYDLDFKNPDSDKSKWITYEQLADQYKQLAAKYPIVSIEDPFAEDDWEAWSYFYKTSGSDFQIVGDDLTVTNPEFIKKAIETKACNALLLKVNQIGTITEAINAAKDSFAAGWGVMVSHRSGETEDVTIADIVVGLRAGQIKTGAPARSERLAKLNQILRIEEELGDKAVYAGDNFRTAINL</sequence>
<gene>
    <name type="primary">ENO</name>
    <name type="synonym">CLAH6</name>
</gene>
<comment type="catalytic activity">
    <reaction>
        <text>(2R)-2-phosphoglycerate = phosphoenolpyruvate + H2O</text>
        <dbReference type="Rhea" id="RHEA:10164"/>
        <dbReference type="ChEBI" id="CHEBI:15377"/>
        <dbReference type="ChEBI" id="CHEBI:58289"/>
        <dbReference type="ChEBI" id="CHEBI:58702"/>
        <dbReference type="EC" id="4.2.1.11"/>
    </reaction>
</comment>
<comment type="cofactor">
    <cofactor evidence="1">
        <name>Mg(2+)</name>
        <dbReference type="ChEBI" id="CHEBI:18420"/>
    </cofactor>
    <text evidence="1">Mg(2+) is required for catalysis and for stabilizing the dimer.</text>
</comment>
<comment type="pathway">
    <text>Carbohydrate degradation; glycolysis; pyruvate from D-glyceraldehyde 3-phosphate: step 4/5.</text>
</comment>
<comment type="subunit">
    <text evidence="1">Homodimer.</text>
</comment>
<comment type="subcellular location">
    <subcellularLocation>
        <location evidence="1">Cytoplasm</location>
    </subcellularLocation>
</comment>
<comment type="allergen">
    <text evidence="3 4">Causes an allergic reaction in human. Binds to IgE. Second most important allergen of C.herbarum in terms of frequency of sensitization.</text>
</comment>
<comment type="similarity">
    <text evidence="5">Belongs to the enolase family.</text>
</comment>
<feature type="chain" id="PRO_0000134046" description="Enolase">
    <location>
        <begin position="1"/>
        <end position="440"/>
    </location>
</feature>
<feature type="region of interest" description="IgE-binding determinant">
    <location>
        <begin position="120"/>
        <end position="189"/>
    </location>
</feature>
<feature type="active site" description="Proton donor" evidence="1">
    <location>
        <position position="211"/>
    </location>
</feature>
<feature type="active site" description="Proton acceptor" evidence="1">
    <location>
        <position position="349"/>
    </location>
</feature>
<feature type="binding site" evidence="1">
    <location>
        <position position="159"/>
    </location>
    <ligand>
        <name>substrate</name>
    </ligand>
</feature>
<feature type="binding site" evidence="1">
    <location>
        <position position="168"/>
    </location>
    <ligand>
        <name>substrate</name>
    </ligand>
</feature>
<feature type="binding site" evidence="1">
    <location>
        <position position="246"/>
    </location>
    <ligand>
        <name>Mg(2+)</name>
        <dbReference type="ChEBI" id="CHEBI:18420"/>
    </ligand>
</feature>
<feature type="binding site" evidence="1">
    <location>
        <position position="297"/>
    </location>
    <ligand>
        <name>Mg(2+)</name>
        <dbReference type="ChEBI" id="CHEBI:18420"/>
    </ligand>
</feature>
<feature type="binding site" evidence="1">
    <location>
        <position position="297"/>
    </location>
    <ligand>
        <name>substrate</name>
    </ligand>
</feature>
<feature type="binding site" evidence="1">
    <location>
        <position position="324"/>
    </location>
    <ligand>
        <name>Mg(2+)</name>
        <dbReference type="ChEBI" id="CHEBI:18420"/>
    </ligand>
</feature>
<feature type="binding site" evidence="1">
    <location>
        <position position="324"/>
    </location>
    <ligand>
        <name>substrate</name>
    </ligand>
</feature>
<feature type="binding site" evidence="1">
    <location>
        <begin position="376"/>
        <end position="379"/>
    </location>
    <ligand>
        <name>substrate</name>
    </ligand>
</feature>
<feature type="binding site" evidence="1">
    <location>
        <position position="400"/>
    </location>
    <ligand>
        <name>substrate</name>
    </ligand>
</feature>
<feature type="mutagenesis site" description="No effect on IgE-binding." evidence="2">
    <original>K</original>
    <variation>A</variation>
    <variation>Q</variation>
    <location>
        <position position="141"/>
    </location>
</feature>
<feature type="sequence conflict" description="In Ref. 3; AAR00929." evidence="5" ref="3">
    <original>G</original>
    <variation>A</variation>
    <location>
        <position position="175"/>
    </location>
</feature>
<reference key="1">
    <citation type="journal article" date="1995" name="Mol. Immunol.">
        <title>Molecular cloning of major and minor allergens of Alternaria alternata and Cladosporium herbarum.</title>
        <authorList>
            <person name="Achatz G."/>
            <person name="Oberkofler H."/>
            <person name="Lechenauer E."/>
            <person name="Simon-Nobbe B."/>
            <person name="Unger A."/>
            <person name="Kandler D."/>
            <person name="Ebner C."/>
            <person name="Prillinger H."/>
            <person name="Kraft D."/>
            <person name="Breitenbach M."/>
        </authorList>
    </citation>
    <scope>NUCLEOTIDE SEQUENCE [MRNA]</scope>
    <scope>ALLERGEN</scope>
    <source>
        <strain>280202-Berlin</strain>
    </source>
</reference>
<reference key="2">
    <citation type="submission" date="1998-10" db="UniProtKB">
        <authorList>
            <person name="Simon B."/>
        </authorList>
    </citation>
    <scope>SEQUENCE REVISION TO 38; 285; 286; 427 AND 428</scope>
</reference>
<reference key="3">
    <citation type="submission" date="2005-09" db="EMBL/GenBank/DDBJ databases">
        <authorList>
            <person name="Simon-Nobbe B."/>
            <person name="Oberkofler H."/>
            <person name="Probst G."/>
            <person name="Breitenbach M."/>
            <person name="Achatz G."/>
        </authorList>
    </citation>
    <scope>NUCLEOTIDE SEQUENCE [GENOMIC DNA]</scope>
    <source>
        <strain>280202-Berlin</strain>
        <tissue>Hyphae</tissue>
    </source>
</reference>
<reference key="4">
    <citation type="journal article" date="1997" name="Int. Arch. Allergy Immunol.">
        <title>Enolases are highly conserved fungal allergens.</title>
        <authorList>
            <person name="Breitenbach M."/>
            <person name="Simon B."/>
            <person name="Probst G."/>
            <person name="Oberkofler H."/>
            <person name="Ferreira F."/>
            <person name="Briza P."/>
            <person name="Achatz G."/>
            <person name="Unger A."/>
            <person name="Ebner C."/>
            <person name="Kraft D."/>
            <person name="Hirschwehr R."/>
        </authorList>
    </citation>
    <scope>ALLERGEN</scope>
</reference>
<reference key="5">
    <citation type="journal article" date="2000" name="J. Allergy Clin. Immunol.">
        <title>IgE-binding epitopes of enolases, a class of highly conserved fungal allergens.</title>
        <authorList>
            <person name="Simon-Nobbe B."/>
            <person name="Probst G."/>
            <person name="Kajava A.V."/>
            <person name="Oberkofler H."/>
            <person name="Susani M."/>
            <person name="Crameri R."/>
            <person name="Ferreira F."/>
            <person name="Ebner C."/>
            <person name="Breitenbach M."/>
        </authorList>
    </citation>
    <scope>IGE-BINDING</scope>
    <scope>MUTAGENESIS OF LYS-141</scope>
</reference>
<reference key="6">
    <citation type="journal article" date="2001" name="Int. Arch. Allergy Immunol.">
        <title>Structure of an IgE-binding peptide from fungal enolases.</title>
        <authorList>
            <person name="Simon-Nobbe B."/>
            <person name="Kodzius R."/>
            <person name="Kajava A."/>
            <person name="Ferreira F."/>
            <person name="Kungl A."/>
            <person name="Achatz G."/>
            <person name="Crameri R."/>
            <person name="Ebner C."/>
            <person name="Breitenbach M."/>
        </authorList>
    </citation>
    <scope>IGE-BINDING</scope>
</reference>
<reference key="7">
    <citation type="journal article" date="2002" name="Chem. Immunol.">
        <title>The allergens of Cladosporium herbarum and Alternaria alternata.</title>
        <authorList>
            <person name="Breitenbach M."/>
            <person name="Simon-Nobbe B."/>
        </authorList>
    </citation>
    <scope>REVIEW</scope>
</reference>
<accession>P42040</accession>
<accession>Q6LC77</accession>
<proteinExistence type="evidence at protein level"/>
<evidence type="ECO:0000250" key="1"/>
<evidence type="ECO:0000269" key="2">
    <source>
    </source>
</evidence>
<evidence type="ECO:0000269" key="3">
    <source>
    </source>
</evidence>
<evidence type="ECO:0000269" key="4">
    <source>
    </source>
</evidence>
<evidence type="ECO:0000305" key="5"/>
<name>ENO_DAVTA</name>
<keyword id="KW-0020">Allergen</keyword>
<keyword id="KW-0963">Cytoplasm</keyword>
<keyword id="KW-0324">Glycolysis</keyword>
<keyword id="KW-0456">Lyase</keyword>
<keyword id="KW-0460">Magnesium</keyword>
<keyword id="KW-0479">Metal-binding</keyword>